<name>LRGA_STAAR</name>
<dbReference type="EMBL" id="BX571856">
    <property type="protein sequence ID" value="CAG39285.1"/>
    <property type="molecule type" value="Genomic_DNA"/>
</dbReference>
<dbReference type="RefSeq" id="WP_001792906.1">
    <property type="nucleotide sequence ID" value="NC_002952.2"/>
</dbReference>
<dbReference type="SMR" id="Q6GK50"/>
<dbReference type="KEGG" id="sar:SAR0259"/>
<dbReference type="HOGENOM" id="CLU_113736_0_1_9"/>
<dbReference type="Proteomes" id="UP000000596">
    <property type="component" value="Chromosome"/>
</dbReference>
<dbReference type="GO" id="GO:0005886">
    <property type="term" value="C:plasma membrane"/>
    <property type="evidence" value="ECO:0007669"/>
    <property type="project" value="UniProtKB-SubCell"/>
</dbReference>
<dbReference type="GO" id="GO:0019835">
    <property type="term" value="P:cytolysis"/>
    <property type="evidence" value="ECO:0007669"/>
    <property type="project" value="UniProtKB-UniRule"/>
</dbReference>
<dbReference type="GO" id="GO:0031640">
    <property type="term" value="P:killing of cells of another organism"/>
    <property type="evidence" value="ECO:0007669"/>
    <property type="project" value="UniProtKB-KW"/>
</dbReference>
<dbReference type="GO" id="GO:0012501">
    <property type="term" value="P:programmed cell death"/>
    <property type="evidence" value="ECO:0007669"/>
    <property type="project" value="UniProtKB-UniRule"/>
</dbReference>
<dbReference type="HAMAP" id="MF_01141">
    <property type="entry name" value="LrgA"/>
    <property type="match status" value="1"/>
</dbReference>
<dbReference type="InterPro" id="IPR023736">
    <property type="entry name" value="Antiholin-like_LrgA"/>
</dbReference>
<dbReference type="InterPro" id="IPR005538">
    <property type="entry name" value="LrgA/CidA"/>
</dbReference>
<dbReference type="NCBIfam" id="NF003155">
    <property type="entry name" value="PRK04125.1"/>
    <property type="match status" value="1"/>
</dbReference>
<dbReference type="PANTHER" id="PTHR33931:SF4">
    <property type="entry name" value="ANTIHOLIN-LIKE PROTEIN LRGA"/>
    <property type="match status" value="1"/>
</dbReference>
<dbReference type="PANTHER" id="PTHR33931">
    <property type="entry name" value="HOLIN-LIKE PROTEIN CIDA-RELATED"/>
    <property type="match status" value="1"/>
</dbReference>
<dbReference type="Pfam" id="PF03788">
    <property type="entry name" value="LrgA"/>
    <property type="match status" value="1"/>
</dbReference>
<evidence type="ECO:0000255" key="1">
    <source>
        <dbReference type="HAMAP-Rule" id="MF_01141"/>
    </source>
</evidence>
<accession>Q6GK50</accession>
<gene>
    <name evidence="1" type="primary">lrgA</name>
    <name type="ordered locus">SAR0259</name>
</gene>
<feature type="chain" id="PRO_0000213193" description="Antiholin-like protein LrgA">
    <location>
        <begin position="1"/>
        <end position="147"/>
    </location>
</feature>
<feature type="transmembrane region" description="Helical" evidence="1">
    <location>
        <begin position="12"/>
        <end position="32"/>
    </location>
</feature>
<feature type="transmembrane region" description="Helical" evidence="1">
    <location>
        <begin position="35"/>
        <end position="55"/>
    </location>
</feature>
<feature type="transmembrane region" description="Helical" evidence="1">
    <location>
        <begin position="74"/>
        <end position="94"/>
    </location>
</feature>
<feature type="transmembrane region" description="Helical" evidence="1">
    <location>
        <begin position="98"/>
        <end position="118"/>
    </location>
</feature>
<sequence>MVVKQQKDASKPAHFFHQVIVIALVLFVSKIIESFMPIPMPASVIGLVLLFVLLCTGAVKLGEVEKVGTTLTNNIGLLFVPAGISVVNSLGVISQAPFLIIGLIIVSTILLLICTGYVTQIIMKVTSRSKGDKVTKKIKIEEAQAHD</sequence>
<organism>
    <name type="scientific">Staphylococcus aureus (strain MRSA252)</name>
    <dbReference type="NCBI Taxonomy" id="282458"/>
    <lineage>
        <taxon>Bacteria</taxon>
        <taxon>Bacillati</taxon>
        <taxon>Bacillota</taxon>
        <taxon>Bacilli</taxon>
        <taxon>Bacillales</taxon>
        <taxon>Staphylococcaceae</taxon>
        <taxon>Staphylococcus</taxon>
    </lineage>
</organism>
<comment type="function">
    <text evidence="1">Inhibits the expression or activity of extracellular murein hydrolases by interacting, possibly with LrgB, with the holin-like proteins CidA and/or CidB. The LrgAB and CidAB proteins may affect the proton motive force of the membrane. May be involved in programmed cell death (PCD), possibly triggering PCD in response to antibiotics and environmental stresses.</text>
</comment>
<comment type="subcellular location">
    <subcellularLocation>
        <location evidence="1">Cell membrane</location>
        <topology evidence="1">Multi-pass membrane protein</topology>
    </subcellularLocation>
</comment>
<comment type="similarity">
    <text evidence="1">Belongs to the CidA/LrgA family. LrgA subfamily.</text>
</comment>
<proteinExistence type="inferred from homology"/>
<reference key="1">
    <citation type="journal article" date="2004" name="Proc. Natl. Acad. Sci. U.S.A.">
        <title>Complete genomes of two clinical Staphylococcus aureus strains: evidence for the rapid evolution of virulence and drug resistance.</title>
        <authorList>
            <person name="Holden M.T.G."/>
            <person name="Feil E.J."/>
            <person name="Lindsay J.A."/>
            <person name="Peacock S.J."/>
            <person name="Day N.P.J."/>
            <person name="Enright M.C."/>
            <person name="Foster T.J."/>
            <person name="Moore C.E."/>
            <person name="Hurst L."/>
            <person name="Atkin R."/>
            <person name="Barron A."/>
            <person name="Bason N."/>
            <person name="Bentley S.D."/>
            <person name="Chillingworth C."/>
            <person name="Chillingworth T."/>
            <person name="Churcher C."/>
            <person name="Clark L."/>
            <person name="Corton C."/>
            <person name="Cronin A."/>
            <person name="Doggett J."/>
            <person name="Dowd L."/>
            <person name="Feltwell T."/>
            <person name="Hance Z."/>
            <person name="Harris B."/>
            <person name="Hauser H."/>
            <person name="Holroyd S."/>
            <person name="Jagels K."/>
            <person name="James K.D."/>
            <person name="Lennard N."/>
            <person name="Line A."/>
            <person name="Mayes R."/>
            <person name="Moule S."/>
            <person name="Mungall K."/>
            <person name="Ormond D."/>
            <person name="Quail M.A."/>
            <person name="Rabbinowitsch E."/>
            <person name="Rutherford K.M."/>
            <person name="Sanders M."/>
            <person name="Sharp S."/>
            <person name="Simmonds M."/>
            <person name="Stevens K."/>
            <person name="Whitehead S."/>
            <person name="Barrell B.G."/>
            <person name="Spratt B.G."/>
            <person name="Parkhill J."/>
        </authorList>
    </citation>
    <scope>NUCLEOTIDE SEQUENCE [LARGE SCALE GENOMIC DNA]</scope>
    <source>
        <strain>MRSA252</strain>
    </source>
</reference>
<protein>
    <recommendedName>
        <fullName evidence="1">Antiholin-like protein LrgA</fullName>
    </recommendedName>
</protein>
<keyword id="KW-1003">Cell membrane</keyword>
<keyword id="KW-0204">Cytolysis</keyword>
<keyword id="KW-0472">Membrane</keyword>
<keyword id="KW-0812">Transmembrane</keyword>
<keyword id="KW-1133">Transmembrane helix</keyword>